<proteinExistence type="inferred from homology"/>
<comment type="function">
    <text evidence="1">Catalyzes the irreversible beta-carboxylation of phosphoenolpyruvate (PEP) to form oxaloacetate (OAA), a four-carbon dicarboxylic acid source for the tricarboxylic acid cycle.</text>
</comment>
<comment type="catalytic activity">
    <reaction evidence="1">
        <text>oxaloacetate + phosphate = phosphoenolpyruvate + hydrogencarbonate</text>
        <dbReference type="Rhea" id="RHEA:28370"/>
        <dbReference type="ChEBI" id="CHEBI:16452"/>
        <dbReference type="ChEBI" id="CHEBI:17544"/>
        <dbReference type="ChEBI" id="CHEBI:43474"/>
        <dbReference type="ChEBI" id="CHEBI:58702"/>
        <dbReference type="EC" id="4.1.1.31"/>
    </reaction>
</comment>
<comment type="cofactor">
    <cofactor evidence="1">
        <name>Mg(2+)</name>
        <dbReference type="ChEBI" id="CHEBI:18420"/>
    </cofactor>
</comment>
<comment type="subunit">
    <text evidence="1">Homotetramer.</text>
</comment>
<comment type="similarity">
    <text evidence="1">Belongs to the PEPCase type 2 family.</text>
</comment>
<reference key="1">
    <citation type="submission" date="2007-04" db="EMBL/GenBank/DDBJ databases">
        <title>Complete sequence of Pyrobaculum arsenaticum DSM 13514.</title>
        <authorList>
            <consortium name="US DOE Joint Genome Institute"/>
            <person name="Copeland A."/>
            <person name="Lucas S."/>
            <person name="Lapidus A."/>
            <person name="Barry K."/>
            <person name="Glavina del Rio T."/>
            <person name="Dalin E."/>
            <person name="Tice H."/>
            <person name="Pitluck S."/>
            <person name="Chain P."/>
            <person name="Malfatti S."/>
            <person name="Shin M."/>
            <person name="Vergez L."/>
            <person name="Schmutz J."/>
            <person name="Larimer F."/>
            <person name="Land M."/>
            <person name="Hauser L."/>
            <person name="Kyrpides N."/>
            <person name="Mikhailova N."/>
            <person name="Cozen A.E."/>
            <person name="Fitz-Gibbon S.T."/>
            <person name="House C.H."/>
            <person name="Saltikov C."/>
            <person name="Lowe T.M."/>
            <person name="Richardson P."/>
        </authorList>
    </citation>
    <scope>NUCLEOTIDE SEQUENCE [LARGE SCALE GENOMIC DNA]</scope>
    <source>
        <strain>ATCC 700994 / DSM 13514 / JCM 11321 / PZ6</strain>
    </source>
</reference>
<keyword id="KW-0120">Carbon dioxide fixation</keyword>
<keyword id="KW-0456">Lyase</keyword>
<keyword id="KW-0460">Magnesium</keyword>
<gene>
    <name evidence="1" type="primary">ppcA</name>
    <name type="ordered locus">Pars_1014</name>
</gene>
<organism>
    <name type="scientific">Pyrobaculum arsenaticum (strain DSM 13514 / JCM 11321 / PZ6)</name>
    <dbReference type="NCBI Taxonomy" id="340102"/>
    <lineage>
        <taxon>Archaea</taxon>
        <taxon>Thermoproteota</taxon>
        <taxon>Thermoprotei</taxon>
        <taxon>Thermoproteales</taxon>
        <taxon>Thermoproteaceae</taxon>
        <taxon>Pyrobaculum</taxon>
    </lineage>
</organism>
<name>CAPPA_PYRAR</name>
<sequence length="460" mass="51926">MMHIPRLMCTQHPDTTVKITTAEEVDEAIVAYTAYGCDEVMVDYEGKMTPYGQPKEIVMKAIRGDVPLGDEFYITVRLPNPKLEEFDRAMLSLEAALVANYFSRRYADAQAVRWVVLPMVEDFDTVILVRRMLRRKAEIYKSETGVDVGEVEVIPLIEDAFVQVKAKVIVGEVFKSEEAREVRVFLGKSDSAVRHGHLASALAIIYAMSKLKEFEAESGIRVRPILGMGSPPFRGALNNPRLAHLEVVQYAGYYTATIQSAVRYDTSLDEYVKVRESILNACCGTRGLVGEEVLPLIQEASAKYRSQAMKHVDKIAEVARLVPSTRDRVSWKEYGRSLLDGDRVVHMPRAIVYTSAWYAMGFPPTLIDAPLLLELAKSDKLDAVFKLLPTYKMELEYDYEFFDPQTARNYLSEELVYAAVELADYLGVEARPTPTYTALLKMPRSEPNIIALSKYRKFLG</sequence>
<dbReference type="EC" id="4.1.1.31" evidence="1"/>
<dbReference type="EMBL" id="CP000660">
    <property type="protein sequence ID" value="ABP50594.1"/>
    <property type="molecule type" value="Genomic_DNA"/>
</dbReference>
<dbReference type="SMR" id="A4WJM7"/>
<dbReference type="STRING" id="340102.Pars_1014"/>
<dbReference type="KEGG" id="pas:Pars_1014"/>
<dbReference type="HOGENOM" id="CLU_517433_0_0_2"/>
<dbReference type="PhylomeDB" id="A4WJM7"/>
<dbReference type="Proteomes" id="UP000001567">
    <property type="component" value="Chromosome"/>
</dbReference>
<dbReference type="GO" id="GO:0000287">
    <property type="term" value="F:magnesium ion binding"/>
    <property type="evidence" value="ECO:0007669"/>
    <property type="project" value="UniProtKB-UniRule"/>
</dbReference>
<dbReference type="GO" id="GO:0008964">
    <property type="term" value="F:phosphoenolpyruvate carboxylase activity"/>
    <property type="evidence" value="ECO:0007669"/>
    <property type="project" value="UniProtKB-UniRule"/>
</dbReference>
<dbReference type="GO" id="GO:0015977">
    <property type="term" value="P:carbon fixation"/>
    <property type="evidence" value="ECO:0007669"/>
    <property type="project" value="UniProtKB-UniRule"/>
</dbReference>
<dbReference type="GO" id="GO:0006107">
    <property type="term" value="P:oxaloacetate metabolic process"/>
    <property type="evidence" value="ECO:0007669"/>
    <property type="project" value="UniProtKB-UniRule"/>
</dbReference>
<dbReference type="GO" id="GO:0006099">
    <property type="term" value="P:tricarboxylic acid cycle"/>
    <property type="evidence" value="ECO:0007669"/>
    <property type="project" value="InterPro"/>
</dbReference>
<dbReference type="HAMAP" id="MF_01904">
    <property type="entry name" value="PEPcase_type2"/>
    <property type="match status" value="1"/>
</dbReference>
<dbReference type="InterPro" id="IPR007566">
    <property type="entry name" value="PEP_COase_arc-type"/>
</dbReference>
<dbReference type="InterPro" id="IPR015813">
    <property type="entry name" value="Pyrv/PenolPyrv_kinase-like_dom"/>
</dbReference>
<dbReference type="NCBIfam" id="TIGR02751">
    <property type="entry name" value="PEPCase_arch"/>
    <property type="match status" value="1"/>
</dbReference>
<dbReference type="Pfam" id="PF14010">
    <property type="entry name" value="PEPcase_2"/>
    <property type="match status" value="1"/>
</dbReference>
<dbReference type="PIRSF" id="PIRSF006677">
    <property type="entry name" value="UCP006677"/>
    <property type="match status" value="1"/>
</dbReference>
<dbReference type="SUPFAM" id="SSF51621">
    <property type="entry name" value="Phosphoenolpyruvate/pyruvate domain"/>
    <property type="match status" value="1"/>
</dbReference>
<accession>A4WJM7</accession>
<protein>
    <recommendedName>
        <fullName evidence="1">Phosphoenolpyruvate carboxylase</fullName>
        <shortName evidence="1">PEPC</shortName>
        <shortName evidence="1">PEPCase</shortName>
        <ecNumber evidence="1">4.1.1.31</ecNumber>
    </recommendedName>
</protein>
<feature type="chain" id="PRO_0000309608" description="Phosphoenolpyruvate carboxylase">
    <location>
        <begin position="1"/>
        <end position="460"/>
    </location>
</feature>
<evidence type="ECO:0000255" key="1">
    <source>
        <dbReference type="HAMAP-Rule" id="MF_01904"/>
    </source>
</evidence>